<comment type="function">
    <text evidence="1">Catalyzes the base-exchange of a guanine (G) residue with the queuine precursor 7-aminomethyl-7-deazaguanine (PreQ1) at position 34 (anticodon wobble position) in tRNAs with GU(N) anticodons (tRNA-Asp, -Asn, -His and -Tyr). Catalysis occurs through a double-displacement mechanism. The nucleophile active site attacks the C1' of nucleotide 34 to detach the guanine base from the RNA, forming a covalent enzyme-RNA intermediate. The proton acceptor active site deprotonates the incoming PreQ1, allowing a nucleophilic attack on the C1' of the ribose to form the product. After dissociation, two additional enzymatic reactions on the tRNA convert PreQ1 to queuine (Q), resulting in the hypermodified nucleoside queuosine (7-(((4,5-cis-dihydroxy-2-cyclopenten-1-yl)amino)methyl)-7-deazaguanosine).</text>
</comment>
<comment type="catalytic activity">
    <reaction evidence="1">
        <text>7-aminomethyl-7-carbaguanine + guanosine(34) in tRNA = 7-aminomethyl-7-carbaguanosine(34) in tRNA + guanine</text>
        <dbReference type="Rhea" id="RHEA:24104"/>
        <dbReference type="Rhea" id="RHEA-COMP:10341"/>
        <dbReference type="Rhea" id="RHEA-COMP:10342"/>
        <dbReference type="ChEBI" id="CHEBI:16235"/>
        <dbReference type="ChEBI" id="CHEBI:58703"/>
        <dbReference type="ChEBI" id="CHEBI:74269"/>
        <dbReference type="ChEBI" id="CHEBI:82833"/>
        <dbReference type="EC" id="2.4.2.29"/>
    </reaction>
</comment>
<comment type="cofactor">
    <cofactor evidence="1">
        <name>Zn(2+)</name>
        <dbReference type="ChEBI" id="CHEBI:29105"/>
    </cofactor>
    <text evidence="1">Binds 1 zinc ion per subunit.</text>
</comment>
<comment type="pathway">
    <text evidence="1">tRNA modification; tRNA-queuosine biosynthesis.</text>
</comment>
<comment type="subunit">
    <text evidence="1">Homodimer. Within each dimer, one monomer is responsible for RNA recognition and catalysis, while the other monomer binds to the replacement base PreQ1.</text>
</comment>
<comment type="similarity">
    <text evidence="1">Belongs to the queuine tRNA-ribosyltransferase family.</text>
</comment>
<reference key="1">
    <citation type="journal article" date="2007" name="PLoS Genet.">
        <title>Genome analysis of Minibacterium massiliensis highlights the convergent evolution of water-living bacteria.</title>
        <authorList>
            <person name="Audic S."/>
            <person name="Robert C."/>
            <person name="Campagna B."/>
            <person name="Parinello H."/>
            <person name="Claverie J.-M."/>
            <person name="Raoult D."/>
            <person name="Drancourt M."/>
        </authorList>
    </citation>
    <scope>NUCLEOTIDE SEQUENCE [LARGE SCALE GENOMIC DNA]</scope>
    <source>
        <strain>Marseille</strain>
    </source>
</reference>
<feature type="chain" id="PRO_1000016805" description="Queuine tRNA-ribosyltransferase">
    <location>
        <begin position="1"/>
        <end position="375"/>
    </location>
</feature>
<feature type="region of interest" description="RNA binding" evidence="1">
    <location>
        <begin position="251"/>
        <end position="257"/>
    </location>
</feature>
<feature type="region of interest" description="RNA binding; important for wobble base 34 recognition" evidence="1">
    <location>
        <begin position="275"/>
        <end position="279"/>
    </location>
</feature>
<feature type="active site" description="Proton acceptor" evidence="1">
    <location>
        <position position="90"/>
    </location>
</feature>
<feature type="active site" description="Nucleophile" evidence="1">
    <location>
        <position position="270"/>
    </location>
</feature>
<feature type="binding site" evidence="1">
    <location>
        <begin position="90"/>
        <end position="94"/>
    </location>
    <ligand>
        <name>substrate</name>
    </ligand>
</feature>
<feature type="binding site" evidence="1">
    <location>
        <position position="144"/>
    </location>
    <ligand>
        <name>substrate</name>
    </ligand>
</feature>
<feature type="binding site" evidence="1">
    <location>
        <position position="193"/>
    </location>
    <ligand>
        <name>substrate</name>
    </ligand>
</feature>
<feature type="binding site" evidence="1">
    <location>
        <position position="220"/>
    </location>
    <ligand>
        <name>substrate</name>
    </ligand>
</feature>
<feature type="binding site" evidence="1">
    <location>
        <position position="308"/>
    </location>
    <ligand>
        <name>Zn(2+)</name>
        <dbReference type="ChEBI" id="CHEBI:29105"/>
    </ligand>
</feature>
<feature type="binding site" evidence="1">
    <location>
        <position position="310"/>
    </location>
    <ligand>
        <name>Zn(2+)</name>
        <dbReference type="ChEBI" id="CHEBI:29105"/>
    </ligand>
</feature>
<feature type="binding site" evidence="1">
    <location>
        <position position="313"/>
    </location>
    <ligand>
        <name>Zn(2+)</name>
        <dbReference type="ChEBI" id="CHEBI:29105"/>
    </ligand>
</feature>
<feature type="binding site" evidence="1">
    <location>
        <position position="339"/>
    </location>
    <ligand>
        <name>Zn(2+)</name>
        <dbReference type="ChEBI" id="CHEBI:29105"/>
    </ligand>
</feature>
<accession>A6SUU4</accession>
<sequence>MLNFKLLKTDGNARRGQLTLNHGVIETPIFMPVGTYGSVKAMSPLELNEIDAQIILGNTFHLWLRPGNDIIAKFGGLHEFMGWNKPILTDSGGFQVFSLGEMRKITEEGVHFSSPINGDKLFLSPEVSMQIQRVLNSDIVMQFDECTPYEIDGRPATTEEAAKSMRMSLRWAKRSMDEFNREENPNALFGIVQGGMFENLRDESLAGLEELNFHGVAIGGLSVGEPKEDMMRVLEHVGPRLPANKPHYLMGVGTPEDLVAGVASGIDMFDCVMPTRNARNGWLFTRFGDIKIKNARYKDDKKPLDESCSCYACRNFSRAYLHHLHRTGEILGARLNTIHNLHYYLDLMREMREAISEGRFQLFVSQFHADRARGS</sequence>
<keyword id="KW-0328">Glycosyltransferase</keyword>
<keyword id="KW-0479">Metal-binding</keyword>
<keyword id="KW-0671">Queuosine biosynthesis</keyword>
<keyword id="KW-0808">Transferase</keyword>
<keyword id="KW-0819">tRNA processing</keyword>
<keyword id="KW-0862">Zinc</keyword>
<organism>
    <name type="scientific">Janthinobacterium sp. (strain Marseille)</name>
    <name type="common">Minibacterium massiliensis</name>
    <dbReference type="NCBI Taxonomy" id="375286"/>
    <lineage>
        <taxon>Bacteria</taxon>
        <taxon>Pseudomonadati</taxon>
        <taxon>Pseudomonadota</taxon>
        <taxon>Betaproteobacteria</taxon>
        <taxon>Burkholderiales</taxon>
        <taxon>Oxalobacteraceae</taxon>
        <taxon>Janthinobacterium</taxon>
    </lineage>
</organism>
<evidence type="ECO:0000255" key="1">
    <source>
        <dbReference type="HAMAP-Rule" id="MF_00168"/>
    </source>
</evidence>
<protein>
    <recommendedName>
        <fullName evidence="1">Queuine tRNA-ribosyltransferase</fullName>
        <ecNumber evidence="1">2.4.2.29</ecNumber>
    </recommendedName>
    <alternativeName>
        <fullName evidence="1">Guanine insertion enzyme</fullName>
    </alternativeName>
    <alternativeName>
        <fullName evidence="1">tRNA-guanine transglycosylase</fullName>
    </alternativeName>
</protein>
<dbReference type="EC" id="2.4.2.29" evidence="1"/>
<dbReference type="EMBL" id="CP000269">
    <property type="protein sequence ID" value="ABR88592.1"/>
    <property type="molecule type" value="Genomic_DNA"/>
</dbReference>
<dbReference type="RefSeq" id="WP_012078216.1">
    <property type="nucleotide sequence ID" value="NC_009659.1"/>
</dbReference>
<dbReference type="SMR" id="A6SUU4"/>
<dbReference type="STRING" id="375286.mma_0351"/>
<dbReference type="KEGG" id="mms:mma_0351"/>
<dbReference type="eggNOG" id="COG0343">
    <property type="taxonomic scope" value="Bacteria"/>
</dbReference>
<dbReference type="HOGENOM" id="CLU_022060_0_1_4"/>
<dbReference type="OrthoDB" id="9805417at2"/>
<dbReference type="UniPathway" id="UPA00392"/>
<dbReference type="Proteomes" id="UP000006388">
    <property type="component" value="Chromosome"/>
</dbReference>
<dbReference type="GO" id="GO:0005829">
    <property type="term" value="C:cytosol"/>
    <property type="evidence" value="ECO:0007669"/>
    <property type="project" value="TreeGrafter"/>
</dbReference>
<dbReference type="GO" id="GO:0046872">
    <property type="term" value="F:metal ion binding"/>
    <property type="evidence" value="ECO:0007669"/>
    <property type="project" value="UniProtKB-KW"/>
</dbReference>
<dbReference type="GO" id="GO:0008479">
    <property type="term" value="F:tRNA-guanosine(34) queuine transglycosylase activity"/>
    <property type="evidence" value="ECO:0007669"/>
    <property type="project" value="UniProtKB-UniRule"/>
</dbReference>
<dbReference type="GO" id="GO:0008616">
    <property type="term" value="P:queuosine biosynthetic process"/>
    <property type="evidence" value="ECO:0007669"/>
    <property type="project" value="UniProtKB-UniRule"/>
</dbReference>
<dbReference type="GO" id="GO:0002099">
    <property type="term" value="P:tRNA wobble guanine modification"/>
    <property type="evidence" value="ECO:0007669"/>
    <property type="project" value="TreeGrafter"/>
</dbReference>
<dbReference type="GO" id="GO:0101030">
    <property type="term" value="P:tRNA-guanine transglycosylation"/>
    <property type="evidence" value="ECO:0007669"/>
    <property type="project" value="InterPro"/>
</dbReference>
<dbReference type="FunFam" id="3.20.20.105:FF:000001">
    <property type="entry name" value="Queuine tRNA-ribosyltransferase"/>
    <property type="match status" value="1"/>
</dbReference>
<dbReference type="Gene3D" id="3.20.20.105">
    <property type="entry name" value="Queuine tRNA-ribosyltransferase-like"/>
    <property type="match status" value="1"/>
</dbReference>
<dbReference type="HAMAP" id="MF_00168">
    <property type="entry name" value="Q_tRNA_Tgt"/>
    <property type="match status" value="1"/>
</dbReference>
<dbReference type="InterPro" id="IPR050076">
    <property type="entry name" value="ArchSynthase1/Queuine_TRR"/>
</dbReference>
<dbReference type="InterPro" id="IPR004803">
    <property type="entry name" value="TGT"/>
</dbReference>
<dbReference type="InterPro" id="IPR036511">
    <property type="entry name" value="TGT-like_sf"/>
</dbReference>
<dbReference type="InterPro" id="IPR002616">
    <property type="entry name" value="tRNA_ribo_trans-like"/>
</dbReference>
<dbReference type="NCBIfam" id="TIGR00430">
    <property type="entry name" value="Q_tRNA_tgt"/>
    <property type="match status" value="1"/>
</dbReference>
<dbReference type="NCBIfam" id="TIGR00449">
    <property type="entry name" value="tgt_general"/>
    <property type="match status" value="1"/>
</dbReference>
<dbReference type="PANTHER" id="PTHR46499">
    <property type="entry name" value="QUEUINE TRNA-RIBOSYLTRANSFERASE"/>
    <property type="match status" value="1"/>
</dbReference>
<dbReference type="PANTHER" id="PTHR46499:SF1">
    <property type="entry name" value="QUEUINE TRNA-RIBOSYLTRANSFERASE"/>
    <property type="match status" value="1"/>
</dbReference>
<dbReference type="Pfam" id="PF01702">
    <property type="entry name" value="TGT"/>
    <property type="match status" value="1"/>
</dbReference>
<dbReference type="SUPFAM" id="SSF51713">
    <property type="entry name" value="tRNA-guanine transglycosylase"/>
    <property type="match status" value="1"/>
</dbReference>
<proteinExistence type="inferred from homology"/>
<name>TGT_JANMA</name>
<gene>
    <name evidence="1" type="primary">tgt</name>
    <name type="ordered locus">mma_0351</name>
</gene>